<comment type="function">
    <text>Excisionase and integrase are necessary for the excision of prophage from the host genome by site-specific recombination at the att site.</text>
</comment>
<gene>
    <name type="primary">xis</name>
</gene>
<feature type="chain" id="PRO_0000077712" description="Excisionase">
    <location>
        <begin position="1"/>
        <end position="72"/>
    </location>
</feature>
<feature type="strand" evidence="1">
    <location>
        <begin position="2"/>
        <end position="4"/>
    </location>
</feature>
<feature type="helix" evidence="1">
    <location>
        <begin position="5"/>
        <end position="11"/>
    </location>
</feature>
<feature type="strand" evidence="1">
    <location>
        <begin position="12"/>
        <end position="14"/>
    </location>
</feature>
<feature type="helix" evidence="1">
    <location>
        <begin position="18"/>
        <end position="27"/>
    </location>
</feature>
<feature type="strand" evidence="1">
    <location>
        <begin position="30"/>
        <end position="32"/>
    </location>
</feature>
<feature type="strand" evidence="1">
    <location>
        <begin position="38"/>
        <end position="44"/>
    </location>
</feature>
<feature type="strand" evidence="1">
    <location>
        <begin position="48"/>
        <end position="51"/>
    </location>
</feature>
<reference key="1">
    <citation type="journal article" date="1989" name="J. Mol. Biol.">
        <title>Determinants of site-specific recombination in the lambdoid coliphage HK022. An evolutionary change in specificity.</title>
        <authorList>
            <person name="Yagil E."/>
            <person name="Dolev S."/>
            <person name="Oberto J."/>
            <person name="Kislev N."/>
            <person name="Ramaiah N."/>
            <person name="Weisberg R.A."/>
        </authorList>
    </citation>
    <scope>NUCLEOTIDE SEQUENCE [GENOMIC DNA]</scope>
</reference>
<reference key="2">
    <citation type="journal article" date="2003" name="Eur. J. Biochem.">
        <title>Solution structure and stability of the full-length excisionase from bacteriophage HK022.</title>
        <authorList>
            <person name="Rogov V.V."/>
            <person name="Luecke C."/>
            <person name="Muresanu L."/>
            <person name="Wienk H."/>
            <person name="Kleinhaus I."/>
            <person name="Werner K."/>
            <person name="Loehr F."/>
            <person name="Pristovsek P."/>
            <person name="Rueterjans H."/>
        </authorList>
    </citation>
    <scope>STRUCTURE BY NMR OF MUTANT SER-28</scope>
</reference>
<protein>
    <recommendedName>
        <fullName>Excisionase</fullName>
    </recommendedName>
</protein>
<dbReference type="EMBL" id="X51962">
    <property type="protein sequence ID" value="CAA36222.1"/>
    <property type="molecule type" value="Genomic_DNA"/>
</dbReference>
<dbReference type="PIR" id="S06533">
    <property type="entry name" value="S06533"/>
</dbReference>
<dbReference type="RefSeq" id="NP_037687.1">
    <property type="nucleotide sequence ID" value="NC_002166.1"/>
</dbReference>
<dbReference type="PDB" id="1PM6">
    <property type="method" value="NMR"/>
    <property type="chains" value="A=1-72"/>
</dbReference>
<dbReference type="PDBsum" id="1PM6"/>
<dbReference type="BMRB" id="P68927"/>
<dbReference type="SMR" id="P68927"/>
<dbReference type="KEGG" id="vg:1262493"/>
<dbReference type="OrthoDB" id="21169at10239"/>
<dbReference type="EvolutionaryTrace" id="P68927"/>
<dbReference type="GO" id="GO:0003677">
    <property type="term" value="F:DNA binding"/>
    <property type="evidence" value="ECO:0007669"/>
    <property type="project" value="UniProtKB-KW"/>
</dbReference>
<dbReference type="GO" id="GO:0006310">
    <property type="term" value="P:DNA recombination"/>
    <property type="evidence" value="ECO:0007669"/>
    <property type="project" value="UniProtKB-KW"/>
</dbReference>
<dbReference type="GO" id="GO:0032359">
    <property type="term" value="P:provirus excision"/>
    <property type="evidence" value="ECO:0007669"/>
    <property type="project" value="UniProtKB-KW"/>
</dbReference>
<dbReference type="DisProt" id="DP01013"/>
<dbReference type="FunFam" id="1.10.1660.20:FF:000001">
    <property type="entry name" value="Excisionase"/>
    <property type="match status" value="1"/>
</dbReference>
<dbReference type="Gene3D" id="1.10.1660.20">
    <property type="match status" value="1"/>
</dbReference>
<dbReference type="InterPro" id="IPR009061">
    <property type="entry name" value="DNA-bd_dom_put_sf"/>
</dbReference>
<dbReference type="InterPro" id="IPR012884">
    <property type="entry name" value="Excisionase-like"/>
</dbReference>
<dbReference type="InterPro" id="IPR038137">
    <property type="entry name" value="Excisionase-like_sf"/>
</dbReference>
<dbReference type="Pfam" id="PF07825">
    <property type="entry name" value="Exc"/>
    <property type="match status" value="1"/>
</dbReference>
<dbReference type="SUPFAM" id="SSF46955">
    <property type="entry name" value="Putative DNA-binding domain"/>
    <property type="match status" value="1"/>
</dbReference>
<accession>P68927</accession>
<accession>P11683</accession>
<accession>P16408</accession>
<proteinExistence type="evidence at protein level"/>
<organismHost>
    <name type="scientific">Escherichia coli</name>
    <dbReference type="NCBI Taxonomy" id="562"/>
</organismHost>
<name>VXIS_BPHK0</name>
<evidence type="ECO:0007829" key="1">
    <source>
        <dbReference type="PDB" id="1PM6"/>
    </source>
</evidence>
<sequence>MYLTLQEWNARQRRPRSLETVRRWVRECRIFPPPVKDGREYLFHESAVKVDLNRPVTGSLLKRIRNGKKAKS</sequence>
<organism>
    <name type="scientific">Escherichia phage HK022</name>
    <name type="common">Bacteriophage HK022</name>
    <dbReference type="NCBI Taxonomy" id="10742"/>
    <lineage>
        <taxon>Viruses</taxon>
        <taxon>Duplodnaviria</taxon>
        <taxon>Heunggongvirae</taxon>
        <taxon>Uroviricota</taxon>
        <taxon>Caudoviricetes</taxon>
        <taxon>Hendrixvirinae</taxon>
        <taxon>Shamshuipovirus</taxon>
    </lineage>
</organism>
<keyword id="KW-0002">3D-structure</keyword>
<keyword id="KW-0233">DNA recombination</keyword>
<keyword id="KW-0238">DNA-binding</keyword>
<keyword id="KW-1250">Viral genome excision</keyword>